<name>CD151_CHLAE</name>
<feature type="chain" id="PRO_0000219229" description="CD151 antigen">
    <location>
        <begin position="1"/>
        <end position="253"/>
    </location>
</feature>
<feature type="topological domain" description="Cytoplasmic" evidence="2">
    <location>
        <begin position="1"/>
        <end position="18"/>
    </location>
</feature>
<feature type="transmembrane region" description="Helical" evidence="2">
    <location>
        <begin position="19"/>
        <end position="39"/>
    </location>
</feature>
<feature type="topological domain" description="Extracellular" evidence="2">
    <location>
        <begin position="40"/>
        <end position="57"/>
    </location>
</feature>
<feature type="transmembrane region" description="Helical" evidence="2">
    <location>
        <begin position="58"/>
        <end position="78"/>
    </location>
</feature>
<feature type="topological domain" description="Cytoplasmic" evidence="2">
    <location>
        <begin position="79"/>
        <end position="91"/>
    </location>
</feature>
<feature type="transmembrane region" description="Helical" evidence="2">
    <location>
        <begin position="92"/>
        <end position="112"/>
    </location>
</feature>
<feature type="topological domain" description="Extracellular" evidence="2">
    <location>
        <begin position="113"/>
        <end position="221"/>
    </location>
</feature>
<feature type="transmembrane region" description="Helical" evidence="2">
    <location>
        <begin position="222"/>
        <end position="242"/>
    </location>
</feature>
<feature type="topological domain" description="Cytoplasmic" evidence="2">
    <location>
        <begin position="243"/>
        <end position="253"/>
    </location>
</feature>
<feature type="lipid moiety-binding region" description="S-palmitoyl cysteine" evidence="1">
    <location>
        <position position="11"/>
    </location>
</feature>
<feature type="lipid moiety-binding region" description="S-palmitoyl cysteine" evidence="1">
    <location>
        <position position="15"/>
    </location>
</feature>
<feature type="lipid moiety-binding region" description="S-palmitoyl cysteine" evidence="1">
    <location>
        <position position="242"/>
    </location>
</feature>
<feature type="lipid moiety-binding region" description="S-palmitoyl cysteine" evidence="1">
    <location>
        <position position="243"/>
    </location>
</feature>
<feature type="glycosylation site" description="N-linked (GlcNAc...) asparagine" evidence="2">
    <location>
        <position position="159"/>
    </location>
</feature>
<evidence type="ECO:0000250" key="1">
    <source>
        <dbReference type="UniProtKB" id="P48509"/>
    </source>
</evidence>
<evidence type="ECO:0000255" key="2"/>
<evidence type="ECO:0000305" key="3"/>
<keyword id="KW-1003">Cell membrane</keyword>
<keyword id="KW-0325">Glycoprotein</keyword>
<keyword id="KW-0449">Lipoprotein</keyword>
<keyword id="KW-0472">Membrane</keyword>
<keyword id="KW-0564">Palmitate</keyword>
<keyword id="KW-0812">Transmembrane</keyword>
<keyword id="KW-1133">Transmembrane helix</keyword>
<keyword id="KW-0832">Ubl conjugation</keyword>
<gene>
    <name type="primary">CD151</name>
</gene>
<dbReference type="EMBL" id="AF275666">
    <property type="protein sequence ID" value="AAF90152.1"/>
    <property type="molecule type" value="mRNA"/>
</dbReference>
<dbReference type="SMR" id="P61170"/>
<dbReference type="GlyCosmos" id="P61170">
    <property type="glycosylation" value="1 site, No reported glycans"/>
</dbReference>
<dbReference type="GO" id="GO:0005886">
    <property type="term" value="C:plasma membrane"/>
    <property type="evidence" value="ECO:0007669"/>
    <property type="project" value="UniProtKB-SubCell"/>
</dbReference>
<dbReference type="GO" id="GO:0005178">
    <property type="term" value="F:integrin binding"/>
    <property type="evidence" value="ECO:0000250"/>
    <property type="project" value="UniProtKB"/>
</dbReference>
<dbReference type="GO" id="GO:0016477">
    <property type="term" value="P:cell migration"/>
    <property type="evidence" value="ECO:0007669"/>
    <property type="project" value="TreeGrafter"/>
</dbReference>
<dbReference type="CDD" id="cd03155">
    <property type="entry name" value="CD151_like_LEL"/>
    <property type="match status" value="1"/>
</dbReference>
<dbReference type="FunFam" id="1.10.1450.10:FF:000005">
    <property type="entry name" value="Tetraspanin"/>
    <property type="match status" value="1"/>
</dbReference>
<dbReference type="Gene3D" id="1.10.1450.10">
    <property type="entry name" value="Tetraspanin"/>
    <property type="match status" value="1"/>
</dbReference>
<dbReference type="InterPro" id="IPR018499">
    <property type="entry name" value="Tetraspanin/Peripherin"/>
</dbReference>
<dbReference type="InterPro" id="IPR000301">
    <property type="entry name" value="Tetraspanin_animals"/>
</dbReference>
<dbReference type="InterPro" id="IPR018503">
    <property type="entry name" value="Tetraspanin_CS"/>
</dbReference>
<dbReference type="InterPro" id="IPR008952">
    <property type="entry name" value="Tetraspanin_EC2_sf"/>
</dbReference>
<dbReference type="PANTHER" id="PTHR19282:SF487">
    <property type="entry name" value="CD151 ANTIGEN"/>
    <property type="match status" value="1"/>
</dbReference>
<dbReference type="PANTHER" id="PTHR19282">
    <property type="entry name" value="TETRASPANIN"/>
    <property type="match status" value="1"/>
</dbReference>
<dbReference type="Pfam" id="PF00335">
    <property type="entry name" value="Tetraspanin"/>
    <property type="match status" value="1"/>
</dbReference>
<dbReference type="PIRSF" id="PIRSF002419">
    <property type="entry name" value="Tetraspanin"/>
    <property type="match status" value="1"/>
</dbReference>
<dbReference type="PRINTS" id="PR00259">
    <property type="entry name" value="TMFOUR"/>
</dbReference>
<dbReference type="SUPFAM" id="SSF48652">
    <property type="entry name" value="Tetraspanin"/>
    <property type="match status" value="1"/>
</dbReference>
<dbReference type="PROSITE" id="PS00421">
    <property type="entry name" value="TM4_1"/>
    <property type="match status" value="1"/>
</dbReference>
<reference key="1">
    <citation type="submission" date="2000-06" db="EMBL/GenBank/DDBJ databases">
        <title>CD151/PETA-3, a tetraspanin molecule, interacts with the 3' untranslated region and partial nucleoprotein gene of porcine reproductive and respiratory syndrome virus RNA.</title>
        <authorList>
            <person name="Shanmukhappa K."/>
            <person name="Kapil S."/>
        </authorList>
    </citation>
    <scope>NUCLEOTIDE SEQUENCE [MRNA]</scope>
</reference>
<protein>
    <recommendedName>
        <fullName>CD151 antigen</fullName>
    </recommendedName>
    <alternativeName>
        <fullName>Platelet-endothelial tetraspan antigen 3</fullName>
        <shortName>PETA-3</shortName>
    </alternativeName>
    <cdAntigenName>CD151</cdAntigenName>
</protein>
<comment type="function">
    <text evidence="1">Structural component of specialized membrane microdomains known as tetraspanin-enriched microdomains (TERMs), which act as platforms for receptor clustering and signaling. Plays a role in various cellular and molecular mechanism through its association with both integrin and non-integrin proteins. These interactions facilitate critical cellular functions, including cell-to-cell communication, wound healing, platelet aggregation, trafficking, cell motility, and angiogenesis. Via interaction with JAM-A/F11R and integrin ITGA3:ITGB1, promotes the recruitment of signaling molecules such as RAC1, CDC42 and RhoGTPases to facilitate the polarization of epithelial cells and the reorganization of the actin cytoskeleton, which are critical steps in cell migration process. Regulates the glycosylation pattern of ITGA3:ITGB1 thereby modulating its activity. Plays an essential role in the maintenance of central laminin-binding integrin ITGA6:ITGB4-containing adhesion complexes. Essential for the proper assembly of the glomerular and tubular basement membranes in kidney. Contributes to T-cell activation by modulating integrin signaling leading to activation of downstream targets PTK2 and MAPK1/MAPK3.</text>
</comment>
<comment type="subunit">
    <text evidence="1">Interacts with integrins ITGA3:ITGB1, ITGA5:ITGB1, ITGA3:ITGB1 and ITGA6:ITGB4 and with CD9 and CD181. Interacts (via the second extracellular domain) with integrin ITGAV:ITGB3. Interacts with ITGA3; this interaction modulates ITGA3 glycosylation pattern. Interacts with F11R. Interacts with RAC1 and CDC42; these interactions mediate physical association of RAC1 and CDC42 with integrin adhesion receptor complexes.</text>
</comment>
<comment type="subcellular location">
    <subcellularLocation>
        <location evidence="1">Cell membrane</location>
        <topology evidence="1">Multi-pass membrane protein</topology>
    </subcellularLocation>
    <text evidence="1">Relocalizes to the immune synapse in T-cells upon activation.</text>
</comment>
<comment type="PTM">
    <text evidence="1">Palmitoylated. Palmitoylation by ZDHHC2 regulates CD151 expression, association with other tetraspanin family proteins and function in cell adhesion.</text>
</comment>
<comment type="PTM">
    <text evidence="1">Ubiquitinated by RNF128 on lysine residues present in the tetraspanin amino terminus via 'Lys-48'-linked ubiquitin leading to proteasomal degradation.</text>
</comment>
<comment type="similarity">
    <text evidence="3">Belongs to the tetraspanin (TM4SF) family.</text>
</comment>
<organism>
    <name type="scientific">Chlorocebus aethiops</name>
    <name type="common">Green monkey</name>
    <name type="synonym">Cercopithecus aethiops</name>
    <dbReference type="NCBI Taxonomy" id="9534"/>
    <lineage>
        <taxon>Eukaryota</taxon>
        <taxon>Metazoa</taxon>
        <taxon>Chordata</taxon>
        <taxon>Craniata</taxon>
        <taxon>Vertebrata</taxon>
        <taxon>Euteleostomi</taxon>
        <taxon>Mammalia</taxon>
        <taxon>Eutheria</taxon>
        <taxon>Euarchontoglires</taxon>
        <taxon>Primates</taxon>
        <taxon>Haplorrhini</taxon>
        <taxon>Catarrhini</taxon>
        <taxon>Cercopithecidae</taxon>
        <taxon>Cercopithecinae</taxon>
        <taxon>Chlorocebus</taxon>
    </lineage>
</organism>
<accession>P61170</accession>
<accession>Q9MYM2</accession>
<proteinExistence type="evidence at transcript level"/>
<sequence>MGEFNEKKTTCGTVCLKYLLFTYNCCFWLAGLAVMAVGIWTLALKSDYISLLASGTYLATAYILVVAGAVVMVTGVLGCCATFKERRNLLRLYFILLLIIFLLEIIAGVLAYVYYQQLNTELKENLKDTMAKRYHQPGHEAVTSAVDQLQQEFHCCGSNNSQDWRDSEWIRLREARGRVVPDSCCKTVVAGCGQRDHAFNIYKVEGGFITKLETFIQEHLRVIGAVGTGIACVQVFGMIFTCCLYRSLKLEHY</sequence>